<gene>
    <name type="primary">P52</name>
    <name type="synonym">PBS36P</name>
    <name type="ORF">PB000891.00.0</name>
    <name evidence="10" type="ORF">PBANKA_1002200</name>
</gene>
<dbReference type="EMBL" id="LK023125">
    <property type="protein sequence ID" value="VUC56020.1"/>
    <property type="molecule type" value="Genomic_DNA"/>
</dbReference>
<dbReference type="SMR" id="Q4Z4D2"/>
<dbReference type="STRING" id="5823.A0A509AKD5"/>
<dbReference type="GlyCosmos" id="Q4Z4D2">
    <property type="glycosylation" value="11 sites, No reported glycans"/>
</dbReference>
<dbReference type="VEuPathDB" id="PlasmoDB:PBANKA_1002200"/>
<dbReference type="eggNOG" id="ENOG502TN9V">
    <property type="taxonomic scope" value="Eukaryota"/>
</dbReference>
<dbReference type="InParanoid" id="A0A509AKD5"/>
<dbReference type="OMA" id="LPKDMTM"/>
<dbReference type="Proteomes" id="UP000074855">
    <property type="component" value="Chromosome 10"/>
</dbReference>
<dbReference type="GO" id="GO:0009986">
    <property type="term" value="C:cell surface"/>
    <property type="evidence" value="ECO:0007669"/>
    <property type="project" value="UniProtKB-SubCell"/>
</dbReference>
<dbReference type="GO" id="GO:0005886">
    <property type="term" value="C:plasma membrane"/>
    <property type="evidence" value="ECO:0007669"/>
    <property type="project" value="UniProtKB-SubCell"/>
</dbReference>
<dbReference type="GO" id="GO:0098552">
    <property type="term" value="C:side of membrane"/>
    <property type="evidence" value="ECO:0007669"/>
    <property type="project" value="UniProtKB-KW"/>
</dbReference>
<dbReference type="Gene3D" id="2.60.40.2860">
    <property type="match status" value="1"/>
</dbReference>
<dbReference type="InterPro" id="IPR010884">
    <property type="entry name" value="6_CYS_dom"/>
</dbReference>
<dbReference type="InterPro" id="IPR038160">
    <property type="entry name" value="6_CYS_dom_sf"/>
</dbReference>
<dbReference type="InterPro" id="IPR051444">
    <property type="entry name" value="Parasite_Repro/Invasion_Surf"/>
</dbReference>
<dbReference type="PANTHER" id="PTHR38796">
    <property type="match status" value="1"/>
</dbReference>
<dbReference type="PANTHER" id="PTHR38796:SF1">
    <property type="entry name" value="ANCHORED PROTEIN, PUTATIVE (AFU_ORTHOLOGUE AFUA_4G09600)-RELATED"/>
    <property type="match status" value="1"/>
</dbReference>
<dbReference type="Pfam" id="PF07422">
    <property type="entry name" value="s48_45"/>
    <property type="match status" value="1"/>
</dbReference>
<dbReference type="SMART" id="SM00970">
    <property type="entry name" value="s48_45"/>
    <property type="match status" value="1"/>
</dbReference>
<dbReference type="PROSITE" id="PS51701">
    <property type="entry name" value="6_CYS"/>
    <property type="match status" value="2"/>
</dbReference>
<proteinExistence type="evidence at protein level"/>
<accession>Q4Z4D2</accession>
<accession>A0A509AKD5</accession>
<reference evidence="11" key="1">
    <citation type="journal article" date="2014" name="BMC Biol.">
        <title>A comprehensive evaluation of rodent malaria parasite genomes and gene expression.</title>
        <authorList>
            <person name="Otto T.D."/>
            <person name="Bohme U."/>
            <person name="Jackson A.P."/>
            <person name="Hunt M."/>
            <person name="Franke-Fayard B."/>
            <person name="Hoeijmakers W.A."/>
            <person name="Religa A.A."/>
            <person name="Robertson L."/>
            <person name="Sanders M."/>
            <person name="Ogun S.A."/>
            <person name="Cunningham D."/>
            <person name="Erhart A."/>
            <person name="Billker O."/>
            <person name="Khan S.M."/>
            <person name="Stunnenberg H.G."/>
            <person name="Langhorne J."/>
            <person name="Holder A.A."/>
            <person name="Waters A.P."/>
            <person name="Newbold C.I."/>
            <person name="Pain A."/>
            <person name="Berriman M."/>
            <person name="Janse C.J."/>
        </authorList>
    </citation>
    <scope>NUCLEOTIDE SEQUENCE [LARGE SCALE GENOMIC DNA]</scope>
    <source>
        <strain evidence="11">ANKA</strain>
    </source>
</reference>
<reference key="2">
    <citation type="journal article" date="2005" name="Mol. Microbiol.">
        <title>Two proteins with 6-cys motifs are required for malarial parasites to commit to infection of the hepatocyte.</title>
        <authorList>
            <person name="Ishino T."/>
            <person name="Chinzei Y."/>
            <person name="Yuda M."/>
        </authorList>
    </citation>
    <scope>FUNCTION</scope>
    <scope>DISRUPTION PHENOTYPE</scope>
    <scope>SUBCELLULAR LOCATION</scope>
    <scope>GPI-ANCHOR</scope>
    <source>
        <strain>ANKA</strain>
    </source>
</reference>
<reference key="3">
    <citation type="journal article" date="2005" name="Proc. Natl. Acad. Sci. U.S.A.">
        <title>Genetically attenuated, P36p-deficient malarial sporozoites induce protective immunity and apoptosis of infected liver cells.</title>
        <authorList>
            <person name="van Dijk M.R."/>
            <person name="Douradinha B."/>
            <person name="Franke-Fayard B."/>
            <person name="Heussler V."/>
            <person name="van Dooren M.W."/>
            <person name="van Schaijk B."/>
            <person name="van Gemert G.J."/>
            <person name="Sauerwein R.W."/>
            <person name="Mota M.M."/>
            <person name="Waters A.P."/>
            <person name="Janse C.J."/>
        </authorList>
    </citation>
    <scope>FUNCTION</scope>
    <scope>DISRUPTION PHENOTYPE</scope>
    <source>
        <strain>ANKA</strain>
    </source>
</reference>
<reference key="4">
    <citation type="journal article" date="2007" name="Int. J. Parasitol.">
        <title>Genetically attenuated P36p-deficient Plasmodium berghei sporozoites confer long-lasting and partial cross-species protection.</title>
        <authorList>
            <person name="Douradinha B."/>
            <person name="van Dijk M.R."/>
            <person name="Ataide R."/>
            <person name="van Gemert G.J."/>
            <person name="Thompson J."/>
            <person name="Franetich J.F."/>
            <person name="Mazier D."/>
            <person name="Luty A.J."/>
            <person name="Sauerwein R."/>
            <person name="Janse C.J."/>
            <person name="Waters A.P."/>
            <person name="Mota M.M."/>
        </authorList>
    </citation>
    <scope>FUNCTION</scope>
    <source>
        <strain>ANKA</strain>
    </source>
</reference>
<reference key="5">
    <citation type="journal article" date="2010" name="PLoS Pathog.">
        <title>Three members of the 6-cys protein family of Plasmodium play a role in gamete fertility.</title>
        <authorList>
            <person name="van Dijk M.R."/>
            <person name="van Schaijk B.C."/>
            <person name="Khan S.M."/>
            <person name="van Dooren M.W."/>
            <person name="Ramesar J."/>
            <person name="Kaczanowski S."/>
            <person name="van Gemert G.J."/>
            <person name="Kroeze H."/>
            <person name="Stunnenberg H.G."/>
            <person name="Eling W.M."/>
            <person name="Sauerwein R.W."/>
            <person name="Waters A.P."/>
            <person name="Janse C.J."/>
        </authorList>
    </citation>
    <scope>DEVELOPMENTAL STAGE</scope>
    <source>
        <strain>ANKA</strain>
    </source>
</reference>
<reference key="6">
    <citation type="journal article" date="2012" name="PLoS ONE">
        <title>Plasmodium berghei Deltap52&amp;p36 parasites develop independent of a parasitophorous vacuole membrane in Huh-7 liver cells.</title>
        <authorList>
            <person name="Ploemen I.H."/>
            <person name="Croes H.J."/>
            <person name="van Gemert G.J."/>
            <person name="Wijers-Rouw M."/>
            <person name="Hermsen C.C."/>
            <person name="Sauerwein R.W."/>
        </authorList>
    </citation>
    <scope>FUNCTION</scope>
    <scope>DISRUPTION PHENOTYPE</scope>
    <source>
        <strain>ANKA</strain>
    </source>
</reference>
<comment type="function">
    <text evidence="4 5 6 8">Involved in sporozoite infection of hepatocytes and replication therein.</text>
</comment>
<comment type="subcellular location">
    <subcellularLocation>
        <location evidence="5">Cell surface</location>
    </subcellularLocation>
    <subcellularLocation>
        <location evidence="9">Cell membrane</location>
        <topology evidence="9">Lipid-anchor</topology>
        <topology evidence="9">GPI-anchor</topology>
    </subcellularLocation>
    <text>Present on the surface of sporozoites.</text>
</comment>
<comment type="developmental stage">
    <text evidence="7">Specifically expressed in liver-infective sporozoites. Not expressed in blood stages.</text>
</comment>
<comment type="disruption phenotype">
    <text evidence="4 5 8">Attenuated parasites that cannot commit to infection, even when they encounter with hepatocytes, resulting in continuous traversal of hepatocytes. Cells lacking both PBS36 and P52/PBS36P are severely affected in their capability to develop into liver stage parasites and abort development soon after invasion; possibly due to the absence of a parasitophorous vacuole membrane (PVM).</text>
</comment>
<feature type="signal peptide" evidence="1">
    <location>
        <begin position="1"/>
        <end position="23"/>
    </location>
</feature>
<feature type="chain" id="PRO_0000423575" description="Sporozoite surface protein P36p">
    <location>
        <begin position="24"/>
        <end position="449"/>
    </location>
</feature>
<feature type="propeptide" id="PRO_0000423576" description="Removed in mature form" evidence="1">
    <location>
        <begin position="450"/>
        <end position="472"/>
    </location>
</feature>
<feature type="domain" description="6-Cys 1" evidence="2">
    <location>
        <begin position="24"/>
        <end position="157"/>
    </location>
</feature>
<feature type="domain" description="6-Cys 2" evidence="2">
    <location>
        <begin position="160"/>
        <end position="299"/>
    </location>
</feature>
<feature type="region of interest" description="Disordered" evidence="3">
    <location>
        <begin position="359"/>
        <end position="385"/>
    </location>
</feature>
<feature type="lipid moiety-binding region" description="GPI-anchor amidated serine" evidence="1">
    <location>
        <position position="449"/>
    </location>
</feature>
<feature type="glycosylation site" description="N-linked (GlcNAc...) asparagine" evidence="1">
    <location>
        <position position="24"/>
    </location>
</feature>
<feature type="glycosylation site" description="N-linked (GlcNAc...) asparagine" evidence="1">
    <location>
        <position position="29"/>
    </location>
</feature>
<feature type="glycosylation site" description="N-linked (GlcNAc...) asparagine" evidence="1">
    <location>
        <position position="93"/>
    </location>
</feature>
<feature type="glycosylation site" description="N-linked (GlcNAc...) asparagine" evidence="1">
    <location>
        <position position="112"/>
    </location>
</feature>
<feature type="glycosylation site" description="N-linked (GlcNAc...) asparagine" evidence="1">
    <location>
        <position position="185"/>
    </location>
</feature>
<feature type="glycosylation site" description="N-linked (GlcNAc...) asparagine" evidence="1">
    <location>
        <position position="295"/>
    </location>
</feature>
<feature type="glycosylation site" description="N-linked (GlcNAc...) asparagine" evidence="1">
    <location>
        <position position="306"/>
    </location>
</feature>
<feature type="glycosylation site" description="N-linked (GlcNAc...) asparagine" evidence="1">
    <location>
        <position position="383"/>
    </location>
</feature>
<feature type="glycosylation site" description="N-linked (GlcNAc...) asparagine" evidence="1">
    <location>
        <position position="396"/>
    </location>
</feature>
<feature type="glycosylation site" description="N-linked (GlcNAc...) asparagine" evidence="1">
    <location>
        <position position="400"/>
    </location>
</feature>
<feature type="glycosylation site" description="N-linked (GlcNAc...) asparagine" evidence="1">
    <location>
        <position position="416"/>
    </location>
</feature>
<feature type="disulfide bond" evidence="2">
    <location>
        <begin position="64"/>
        <end position="138"/>
    </location>
</feature>
<feature type="disulfide bond" evidence="2">
    <location>
        <begin position="81"/>
        <end position="136"/>
    </location>
</feature>
<feature type="disulfide bond" evidence="2">
    <location>
        <begin position="164"/>
        <end position="188"/>
    </location>
</feature>
<feature type="disulfide bond" evidence="2">
    <location>
        <begin position="202"/>
        <end position="281"/>
    </location>
</feature>
<feature type="disulfide bond" evidence="2">
    <location>
        <begin position="222"/>
        <end position="279"/>
    </location>
</feature>
<name>PF36P_PLABA</name>
<organism>
    <name type="scientific">Plasmodium berghei (strain Anka)</name>
    <dbReference type="NCBI Taxonomy" id="5823"/>
    <lineage>
        <taxon>Eukaryota</taxon>
        <taxon>Sar</taxon>
        <taxon>Alveolata</taxon>
        <taxon>Apicomplexa</taxon>
        <taxon>Aconoidasida</taxon>
        <taxon>Haemosporida</taxon>
        <taxon>Plasmodiidae</taxon>
        <taxon>Plasmodium</taxon>
        <taxon>Plasmodium (Vinckeia)</taxon>
    </lineage>
</organism>
<keyword id="KW-1003">Cell membrane</keyword>
<keyword id="KW-1015">Disulfide bond</keyword>
<keyword id="KW-0325">Glycoprotein</keyword>
<keyword id="KW-0336">GPI-anchor</keyword>
<keyword id="KW-0449">Lipoprotein</keyword>
<keyword id="KW-0461">Malaria</keyword>
<keyword id="KW-0472">Membrane</keyword>
<keyword id="KW-1185">Reference proteome</keyword>
<keyword id="KW-0677">Repeat</keyword>
<keyword id="KW-0732">Signal</keyword>
<protein>
    <recommendedName>
        <fullName>Sporozoite surface protein P36p</fullName>
    </recommendedName>
    <alternativeName>
        <fullName>Sporozoite surface protein P52</fullName>
    </alternativeName>
    <alternativeName>
        <fullName>Sporozoite surface protein Pbs36p</fullName>
    </alternativeName>
</protein>
<evidence type="ECO:0000255" key="1"/>
<evidence type="ECO:0000255" key="2">
    <source>
        <dbReference type="PROSITE-ProRule" id="PRU01038"/>
    </source>
</evidence>
<evidence type="ECO:0000256" key="3">
    <source>
        <dbReference type="SAM" id="MobiDB-lite"/>
    </source>
</evidence>
<evidence type="ECO:0000269" key="4">
    <source>
    </source>
</evidence>
<evidence type="ECO:0000269" key="5">
    <source>
    </source>
</evidence>
<evidence type="ECO:0000269" key="6">
    <source>
    </source>
</evidence>
<evidence type="ECO:0000269" key="7">
    <source>
    </source>
</evidence>
<evidence type="ECO:0000269" key="8">
    <source>
    </source>
</evidence>
<evidence type="ECO:0000305" key="9">
    <source>
    </source>
</evidence>
<evidence type="ECO:0000312" key="10">
    <source>
        <dbReference type="EMBL" id="VUC56020.1"/>
    </source>
</evidence>
<evidence type="ECO:0000312" key="11">
    <source>
        <dbReference type="Proteomes" id="UP000074855"/>
    </source>
</evidence>
<sequence length="472" mass="55169">MMKRRRIFMYYCFCFLLKYVAFSNVTNPNTTLGHFEICKINIYSGDAEECVLENEFGKMFLFICDIDYNEMSKNIVLPSECAKKTYIDHVNPNGTSPEVNTYDIFPDLIGANESKFRDKFYFYGTPYSSKDIDFICLCFSEVKPDIKHIIKMSFKKMTKKIKGCDFGDNVPTKKDLTNGKALYENSSCHIYAYPGDVIGINCYKKDINNIYNNNLELSPNNCFHNVYYENDILLSSKNLIPNSRVIPDPSNDVKLSKMHSYMSYIILPDEINENVKISCSCKRNEYVGTMFLYVNTSKNILTYTGNNVEETAHLNDHYISIGDMWDMGLYENPEQIQSIISNHANKKYYEHMKIYKGNKMDPSDEDESNENAHNGNRANKDANYSEKMVDNRRQKNNSLNHTNYHGNYNENDNEINISTHDKYYEDHHLGSNRPLRKKRTFWQNLFGTSSSYYEVFNYFSIAFILIIHMLLW</sequence>